<proteinExistence type="inferred from homology"/>
<accession>Q5LHZ1</accession>
<gene>
    <name evidence="1" type="primary">argC</name>
    <name type="ordered locus">BF0480</name>
</gene>
<protein>
    <recommendedName>
        <fullName evidence="1">N-acetyl-gamma-glutamyl-phosphate reductase</fullName>
        <shortName evidence="1">AGPR</shortName>
        <ecNumber evidence="1">1.2.1.38</ecNumber>
    </recommendedName>
    <alternativeName>
        <fullName evidence="1">N-acetyl-glutamate semialdehyde dehydrogenase</fullName>
        <shortName evidence="1">NAGSA dehydrogenase</shortName>
    </alternativeName>
</protein>
<organism>
    <name type="scientific">Bacteroides fragilis (strain ATCC 25285 / DSM 2151 / CCUG 4856 / JCM 11019 / LMG 10263 / NCTC 9343 / Onslow / VPI 2553 / EN-2)</name>
    <dbReference type="NCBI Taxonomy" id="272559"/>
    <lineage>
        <taxon>Bacteria</taxon>
        <taxon>Pseudomonadati</taxon>
        <taxon>Bacteroidota</taxon>
        <taxon>Bacteroidia</taxon>
        <taxon>Bacteroidales</taxon>
        <taxon>Bacteroidaceae</taxon>
        <taxon>Bacteroides</taxon>
    </lineage>
</organism>
<comment type="function">
    <text evidence="1">Catalyzes the NADPH-dependent reduction of N-acetyl-5-glutamyl phosphate to yield N-acetyl-L-glutamate 5-semialdehyde.</text>
</comment>
<comment type="catalytic activity">
    <reaction evidence="1">
        <text>N-acetyl-L-glutamate 5-semialdehyde + phosphate + NADP(+) = N-acetyl-L-glutamyl 5-phosphate + NADPH + H(+)</text>
        <dbReference type="Rhea" id="RHEA:21588"/>
        <dbReference type="ChEBI" id="CHEBI:15378"/>
        <dbReference type="ChEBI" id="CHEBI:29123"/>
        <dbReference type="ChEBI" id="CHEBI:43474"/>
        <dbReference type="ChEBI" id="CHEBI:57783"/>
        <dbReference type="ChEBI" id="CHEBI:57936"/>
        <dbReference type="ChEBI" id="CHEBI:58349"/>
        <dbReference type="EC" id="1.2.1.38"/>
    </reaction>
</comment>
<comment type="pathway">
    <text evidence="1">Amino-acid biosynthesis; L-arginine biosynthesis; N(2)-acetyl-L-ornithine from L-glutamate: step 3/4.</text>
</comment>
<comment type="subcellular location">
    <subcellularLocation>
        <location evidence="1">Cytoplasm</location>
    </subcellularLocation>
</comment>
<comment type="similarity">
    <text evidence="1">Belongs to the NAGSA dehydrogenase family. Type 1 subfamily.</text>
</comment>
<feature type="chain" id="PRO_1000010977" description="N-acetyl-gamma-glutamyl-phosphate reductase">
    <location>
        <begin position="1"/>
        <end position="322"/>
    </location>
</feature>
<feature type="active site" evidence="1">
    <location>
        <position position="132"/>
    </location>
</feature>
<reference key="1">
    <citation type="journal article" date="2005" name="Science">
        <title>Extensive DNA inversions in the B. fragilis genome control variable gene expression.</title>
        <authorList>
            <person name="Cerdeno-Tarraga A.-M."/>
            <person name="Patrick S."/>
            <person name="Crossman L.C."/>
            <person name="Blakely G."/>
            <person name="Abratt V."/>
            <person name="Lennard N."/>
            <person name="Poxton I."/>
            <person name="Duerden B."/>
            <person name="Harris B."/>
            <person name="Quail M.A."/>
            <person name="Barron A."/>
            <person name="Clark L."/>
            <person name="Corton C."/>
            <person name="Doggett J."/>
            <person name="Holden M.T.G."/>
            <person name="Larke N."/>
            <person name="Line A."/>
            <person name="Lord A."/>
            <person name="Norbertczak H."/>
            <person name="Ormond D."/>
            <person name="Price C."/>
            <person name="Rabbinowitsch E."/>
            <person name="Woodward J."/>
            <person name="Barrell B.G."/>
            <person name="Parkhill J."/>
        </authorList>
    </citation>
    <scope>NUCLEOTIDE SEQUENCE [LARGE SCALE GENOMIC DNA]</scope>
    <source>
        <strain>ATCC 25285 / DSM 2151 / CCUG 4856 / JCM 11019 / LMG 10263 / NCTC 9343 / Onslow / VPI 2553 / EN-2</strain>
    </source>
</reference>
<sequence length="322" mass="35907">MIKAGIIGGAGYTAGELIRLLINHPETEIVFINSTSNAGNKITDVHEGLYGECDLAFTDELPLEDIDVLFFCTAHGDTKKFMESHNIPEELKIIDLSMDYRIASPDHDFIYGLPELNRRATCTAKHVANPGCFATCIQLGLLPLAKHLMLNEDVMVNAITGSTGAGVKPGATSHFSWRNNNMSVYKAFEHQHVPEIKQSLKQLQNSFDAEIDFIPYRGDFPRGIFATLVVKTKVALEEIVRMYEEYYAKDSFVHIVDKNIDLKQVVNTNKCLIHLEKHGDKLLIISCIDNLLKGASGQAVHNMNLMFNLEETVGLRLKPSAF</sequence>
<evidence type="ECO:0000255" key="1">
    <source>
        <dbReference type="HAMAP-Rule" id="MF_00150"/>
    </source>
</evidence>
<keyword id="KW-0028">Amino-acid biosynthesis</keyword>
<keyword id="KW-0055">Arginine biosynthesis</keyword>
<keyword id="KW-0963">Cytoplasm</keyword>
<keyword id="KW-0521">NADP</keyword>
<keyword id="KW-0560">Oxidoreductase</keyword>
<dbReference type="EC" id="1.2.1.38" evidence="1"/>
<dbReference type="EMBL" id="CR626927">
    <property type="protein sequence ID" value="CAH06239.1"/>
    <property type="molecule type" value="Genomic_DNA"/>
</dbReference>
<dbReference type="RefSeq" id="WP_005784397.1">
    <property type="nucleotide sequence ID" value="NZ_UFTH01000001.1"/>
</dbReference>
<dbReference type="SMR" id="Q5LHZ1"/>
<dbReference type="PaxDb" id="272559-BF9343_0460"/>
<dbReference type="GeneID" id="60365894"/>
<dbReference type="KEGG" id="bfs:BF9343_0460"/>
<dbReference type="eggNOG" id="COG0002">
    <property type="taxonomic scope" value="Bacteria"/>
</dbReference>
<dbReference type="HOGENOM" id="CLU_006384_0_1_10"/>
<dbReference type="UniPathway" id="UPA00068">
    <property type="reaction ID" value="UER00108"/>
</dbReference>
<dbReference type="Proteomes" id="UP000006731">
    <property type="component" value="Chromosome"/>
</dbReference>
<dbReference type="GO" id="GO:0005737">
    <property type="term" value="C:cytoplasm"/>
    <property type="evidence" value="ECO:0007669"/>
    <property type="project" value="UniProtKB-SubCell"/>
</dbReference>
<dbReference type="GO" id="GO:0003942">
    <property type="term" value="F:N-acetyl-gamma-glutamyl-phosphate reductase activity"/>
    <property type="evidence" value="ECO:0007669"/>
    <property type="project" value="UniProtKB-UniRule"/>
</dbReference>
<dbReference type="GO" id="GO:0051287">
    <property type="term" value="F:NAD binding"/>
    <property type="evidence" value="ECO:0007669"/>
    <property type="project" value="InterPro"/>
</dbReference>
<dbReference type="GO" id="GO:0070401">
    <property type="term" value="F:NADP+ binding"/>
    <property type="evidence" value="ECO:0007669"/>
    <property type="project" value="InterPro"/>
</dbReference>
<dbReference type="GO" id="GO:0006526">
    <property type="term" value="P:L-arginine biosynthetic process"/>
    <property type="evidence" value="ECO:0007669"/>
    <property type="project" value="UniProtKB-UniRule"/>
</dbReference>
<dbReference type="CDD" id="cd23934">
    <property type="entry name" value="AGPR_1_C"/>
    <property type="match status" value="1"/>
</dbReference>
<dbReference type="CDD" id="cd17895">
    <property type="entry name" value="AGPR_1_N"/>
    <property type="match status" value="1"/>
</dbReference>
<dbReference type="Gene3D" id="3.30.360.10">
    <property type="entry name" value="Dihydrodipicolinate Reductase, domain 2"/>
    <property type="match status" value="1"/>
</dbReference>
<dbReference type="Gene3D" id="3.40.50.720">
    <property type="entry name" value="NAD(P)-binding Rossmann-like Domain"/>
    <property type="match status" value="1"/>
</dbReference>
<dbReference type="HAMAP" id="MF_00150">
    <property type="entry name" value="ArgC_type1"/>
    <property type="match status" value="1"/>
</dbReference>
<dbReference type="InterPro" id="IPR023013">
    <property type="entry name" value="AGPR_AS"/>
</dbReference>
<dbReference type="InterPro" id="IPR000706">
    <property type="entry name" value="AGPR_type-1"/>
</dbReference>
<dbReference type="InterPro" id="IPR036291">
    <property type="entry name" value="NAD(P)-bd_dom_sf"/>
</dbReference>
<dbReference type="InterPro" id="IPR050085">
    <property type="entry name" value="NAGSA_dehydrogenase"/>
</dbReference>
<dbReference type="InterPro" id="IPR000534">
    <property type="entry name" value="Semialdehyde_DH_NAD-bd"/>
</dbReference>
<dbReference type="NCBIfam" id="TIGR01850">
    <property type="entry name" value="argC"/>
    <property type="match status" value="1"/>
</dbReference>
<dbReference type="PANTHER" id="PTHR32338:SF10">
    <property type="entry name" value="N-ACETYL-GAMMA-GLUTAMYL-PHOSPHATE REDUCTASE, CHLOROPLASTIC-RELATED"/>
    <property type="match status" value="1"/>
</dbReference>
<dbReference type="PANTHER" id="PTHR32338">
    <property type="entry name" value="N-ACETYL-GAMMA-GLUTAMYL-PHOSPHATE REDUCTASE, CHLOROPLASTIC-RELATED-RELATED"/>
    <property type="match status" value="1"/>
</dbReference>
<dbReference type="Pfam" id="PF01118">
    <property type="entry name" value="Semialdhyde_dh"/>
    <property type="match status" value="1"/>
</dbReference>
<dbReference type="Pfam" id="PF22698">
    <property type="entry name" value="Semialdhyde_dhC_1"/>
    <property type="match status" value="1"/>
</dbReference>
<dbReference type="SMART" id="SM00859">
    <property type="entry name" value="Semialdhyde_dh"/>
    <property type="match status" value="1"/>
</dbReference>
<dbReference type="SUPFAM" id="SSF55347">
    <property type="entry name" value="Glyceraldehyde-3-phosphate dehydrogenase-like, C-terminal domain"/>
    <property type="match status" value="1"/>
</dbReference>
<dbReference type="SUPFAM" id="SSF51735">
    <property type="entry name" value="NAD(P)-binding Rossmann-fold domains"/>
    <property type="match status" value="1"/>
</dbReference>
<dbReference type="PROSITE" id="PS01224">
    <property type="entry name" value="ARGC"/>
    <property type="match status" value="1"/>
</dbReference>
<name>ARGC_BACFN</name>